<name>CPAA_BACSU</name>
<comment type="function">
    <text evidence="1">Probable Na(+)/H(+) antiporter.</text>
</comment>
<comment type="activity regulation">
    <text evidence="5">Binds cyclic di-AMP (c-di-AMP), which may regulate the transporter activity.</text>
</comment>
<comment type="subcellular location">
    <subcellularLocation>
        <location evidence="7">Cell membrane</location>
        <topology evidence="2">Multi-pass membrane protein</topology>
    </subcellularLocation>
</comment>
<comment type="similarity">
    <text evidence="7">Belongs to the monovalent cation:proton antiporter 2 (CPA2) transporter (TC 2.A.37) family.</text>
</comment>
<proteinExistence type="inferred from homology"/>
<evidence type="ECO:0000250" key="1"/>
<evidence type="ECO:0000255" key="2"/>
<evidence type="ECO:0000255" key="3">
    <source>
        <dbReference type="PROSITE-ProRule" id="PRU00543"/>
    </source>
</evidence>
<evidence type="ECO:0000255" key="4">
    <source>
        <dbReference type="PROSITE-ProRule" id="PRU00544"/>
    </source>
</evidence>
<evidence type="ECO:0000269" key="5">
    <source>
    </source>
</evidence>
<evidence type="ECO:0000303" key="6">
    <source>
    </source>
</evidence>
<evidence type="ECO:0000305" key="7"/>
<protein>
    <recommendedName>
        <fullName>Putative Na(+)/H(+) antiporter YjbQ</fullName>
    </recommendedName>
</protein>
<sequence length="614" mass="67468">MAHTSVASLVVVLIVAFLTPILLHRFKLSIPVVVAEIIMGLIIGKSGLNLVVEGDTWLQTLSMLGFIFLMFLSGLEIDFSSFEKGKKKQFLPNGKEAPNTFAAASVIFVGIFILSLLLSYGFVLAGFIQNAFLMTLIISTISLGVVVPTLKEERIMNSNIGQIILLVAVIADLATMILLAVFSSLYGEDSGNMWLLMILFAAGVVLYFFGRVFKHRSFVQSMSKGTIQIGTRAIFTLIIVLVALSESLGAENILGAFLAGVLVSLLSPNKELVQQLDSFGYGFLIPIFFVMVGVKLDIWTLFQDKTILIMIPLLLLALLVSKIIPVMYLKKWYDNRTIFASGFLLTSTLSLVIAAATIGQQLHVISTNMSGALILVAVIASIFTPICFKKLYKREEQPEEKKTITFIGANQMTLPVTLELPEEEYDVRVVHVYQENAEEKLSESVFAVETISDYEHETLESLGIFETDILVVATGNEDMNADIALLAKDKGTERVIASVGSPEHEAALKEQGISIFSILLSTKTLLRALIEAPGVMKLLTNQESSLYQINMENSKYDGVILREFPLTGDVIFVRIFRGVDSIVPHGDTRLKLGDRLIVTGSRGYVTDLKKTLEG</sequence>
<dbReference type="EMBL" id="AL009126">
    <property type="protein sequence ID" value="CAB13021.1"/>
    <property type="molecule type" value="Genomic_DNA"/>
</dbReference>
<dbReference type="PIR" id="A69845">
    <property type="entry name" value="A69845"/>
</dbReference>
<dbReference type="RefSeq" id="WP_003232910.1">
    <property type="nucleotide sequence ID" value="NZ_OZ025638.1"/>
</dbReference>
<dbReference type="SMR" id="O31615"/>
<dbReference type="FunCoup" id="O31615">
    <property type="interactions" value="262"/>
</dbReference>
<dbReference type="STRING" id="224308.BSU11640"/>
<dbReference type="PaxDb" id="224308-BSU11640"/>
<dbReference type="EnsemblBacteria" id="CAB13021">
    <property type="protein sequence ID" value="CAB13021"/>
    <property type="gene ID" value="BSU_11640"/>
</dbReference>
<dbReference type="GeneID" id="939371"/>
<dbReference type="KEGG" id="bsu:BSU11640"/>
<dbReference type="PATRIC" id="fig|224308.179.peg.1253"/>
<dbReference type="eggNOG" id="COG0475">
    <property type="taxonomic scope" value="Bacteria"/>
</dbReference>
<dbReference type="eggNOG" id="COG0569">
    <property type="taxonomic scope" value="Bacteria"/>
</dbReference>
<dbReference type="InParanoid" id="O31615"/>
<dbReference type="OrthoDB" id="9793589at2"/>
<dbReference type="PhylomeDB" id="O31615"/>
<dbReference type="BioCyc" id="BSUB:BSU11640-MONOMER"/>
<dbReference type="Proteomes" id="UP000001570">
    <property type="component" value="Chromosome"/>
</dbReference>
<dbReference type="GO" id="GO:0005886">
    <property type="term" value="C:plasma membrane"/>
    <property type="evidence" value="ECO:0007669"/>
    <property type="project" value="UniProtKB-SubCell"/>
</dbReference>
<dbReference type="GO" id="GO:0015297">
    <property type="term" value="F:antiporter activity"/>
    <property type="evidence" value="ECO:0007669"/>
    <property type="project" value="UniProtKB-KW"/>
</dbReference>
<dbReference type="GO" id="GO:0008324">
    <property type="term" value="F:monoatomic cation transmembrane transporter activity"/>
    <property type="evidence" value="ECO:0007669"/>
    <property type="project" value="InterPro"/>
</dbReference>
<dbReference type="GO" id="GO:0006813">
    <property type="term" value="P:potassium ion transport"/>
    <property type="evidence" value="ECO:0007669"/>
    <property type="project" value="InterPro"/>
</dbReference>
<dbReference type="GO" id="GO:1902600">
    <property type="term" value="P:proton transmembrane transport"/>
    <property type="evidence" value="ECO:0007669"/>
    <property type="project" value="InterPro"/>
</dbReference>
<dbReference type="Gene3D" id="1.20.1530.20">
    <property type="match status" value="1"/>
</dbReference>
<dbReference type="Gene3D" id="3.40.50.720">
    <property type="entry name" value="NAD(P)-binding Rossmann-like Domain"/>
    <property type="match status" value="1"/>
</dbReference>
<dbReference type="Gene3D" id="3.30.70.1450">
    <property type="entry name" value="Regulator of K+ conductance, C-terminal domain"/>
    <property type="match status" value="1"/>
</dbReference>
<dbReference type="InterPro" id="IPR006153">
    <property type="entry name" value="Cation/H_exchanger_TM"/>
</dbReference>
<dbReference type="InterPro" id="IPR038770">
    <property type="entry name" value="Na+/solute_symporter_sf"/>
</dbReference>
<dbReference type="InterPro" id="IPR036291">
    <property type="entry name" value="NAD(P)-bd_dom_sf"/>
</dbReference>
<dbReference type="InterPro" id="IPR006037">
    <property type="entry name" value="RCK_C"/>
</dbReference>
<dbReference type="InterPro" id="IPR036721">
    <property type="entry name" value="RCK_C_sf"/>
</dbReference>
<dbReference type="InterPro" id="IPR003148">
    <property type="entry name" value="RCK_N"/>
</dbReference>
<dbReference type="PANTHER" id="PTHR43562:SF1">
    <property type="entry name" value="NA(+)_H(+) ANTIPORTER YJBQ-RELATED"/>
    <property type="match status" value="1"/>
</dbReference>
<dbReference type="PANTHER" id="PTHR43562">
    <property type="entry name" value="NAPA-TYPE SODIUM/HYDROGEN ANTIPORTER"/>
    <property type="match status" value="1"/>
</dbReference>
<dbReference type="Pfam" id="PF00999">
    <property type="entry name" value="Na_H_Exchanger"/>
    <property type="match status" value="1"/>
</dbReference>
<dbReference type="Pfam" id="PF02080">
    <property type="entry name" value="TrkA_C"/>
    <property type="match status" value="1"/>
</dbReference>
<dbReference type="Pfam" id="PF02254">
    <property type="entry name" value="TrkA_N"/>
    <property type="match status" value="1"/>
</dbReference>
<dbReference type="SUPFAM" id="SSF51735">
    <property type="entry name" value="NAD(P)-binding Rossmann-fold domains"/>
    <property type="match status" value="1"/>
</dbReference>
<dbReference type="SUPFAM" id="SSF116726">
    <property type="entry name" value="TrkA C-terminal domain-like"/>
    <property type="match status" value="1"/>
</dbReference>
<dbReference type="PROSITE" id="PS51202">
    <property type="entry name" value="RCK_C"/>
    <property type="match status" value="1"/>
</dbReference>
<dbReference type="PROSITE" id="PS51201">
    <property type="entry name" value="RCK_N"/>
    <property type="match status" value="1"/>
</dbReference>
<organism>
    <name type="scientific">Bacillus subtilis (strain 168)</name>
    <dbReference type="NCBI Taxonomy" id="224308"/>
    <lineage>
        <taxon>Bacteria</taxon>
        <taxon>Bacillati</taxon>
        <taxon>Bacillota</taxon>
        <taxon>Bacilli</taxon>
        <taxon>Bacillales</taxon>
        <taxon>Bacillaceae</taxon>
        <taxon>Bacillus</taxon>
    </lineage>
</organism>
<reference key="1">
    <citation type="journal article" date="1997" name="Nature">
        <title>The complete genome sequence of the Gram-positive bacterium Bacillus subtilis.</title>
        <authorList>
            <person name="Kunst F."/>
            <person name="Ogasawara N."/>
            <person name="Moszer I."/>
            <person name="Albertini A.M."/>
            <person name="Alloni G."/>
            <person name="Azevedo V."/>
            <person name="Bertero M.G."/>
            <person name="Bessieres P."/>
            <person name="Bolotin A."/>
            <person name="Borchert S."/>
            <person name="Borriss R."/>
            <person name="Boursier L."/>
            <person name="Brans A."/>
            <person name="Braun M."/>
            <person name="Brignell S.C."/>
            <person name="Bron S."/>
            <person name="Brouillet S."/>
            <person name="Bruschi C.V."/>
            <person name="Caldwell B."/>
            <person name="Capuano V."/>
            <person name="Carter N.M."/>
            <person name="Choi S.-K."/>
            <person name="Codani J.-J."/>
            <person name="Connerton I.F."/>
            <person name="Cummings N.J."/>
            <person name="Daniel R.A."/>
            <person name="Denizot F."/>
            <person name="Devine K.M."/>
            <person name="Duesterhoeft A."/>
            <person name="Ehrlich S.D."/>
            <person name="Emmerson P.T."/>
            <person name="Entian K.-D."/>
            <person name="Errington J."/>
            <person name="Fabret C."/>
            <person name="Ferrari E."/>
            <person name="Foulger D."/>
            <person name="Fritz C."/>
            <person name="Fujita M."/>
            <person name="Fujita Y."/>
            <person name="Fuma S."/>
            <person name="Galizzi A."/>
            <person name="Galleron N."/>
            <person name="Ghim S.-Y."/>
            <person name="Glaser P."/>
            <person name="Goffeau A."/>
            <person name="Golightly E.J."/>
            <person name="Grandi G."/>
            <person name="Guiseppi G."/>
            <person name="Guy B.J."/>
            <person name="Haga K."/>
            <person name="Haiech J."/>
            <person name="Harwood C.R."/>
            <person name="Henaut A."/>
            <person name="Hilbert H."/>
            <person name="Holsappel S."/>
            <person name="Hosono S."/>
            <person name="Hullo M.-F."/>
            <person name="Itaya M."/>
            <person name="Jones L.-M."/>
            <person name="Joris B."/>
            <person name="Karamata D."/>
            <person name="Kasahara Y."/>
            <person name="Klaerr-Blanchard M."/>
            <person name="Klein C."/>
            <person name="Kobayashi Y."/>
            <person name="Koetter P."/>
            <person name="Koningstein G."/>
            <person name="Krogh S."/>
            <person name="Kumano M."/>
            <person name="Kurita K."/>
            <person name="Lapidus A."/>
            <person name="Lardinois S."/>
            <person name="Lauber J."/>
            <person name="Lazarevic V."/>
            <person name="Lee S.-M."/>
            <person name="Levine A."/>
            <person name="Liu H."/>
            <person name="Masuda S."/>
            <person name="Mauel C."/>
            <person name="Medigue C."/>
            <person name="Medina N."/>
            <person name="Mellado R.P."/>
            <person name="Mizuno M."/>
            <person name="Moestl D."/>
            <person name="Nakai S."/>
            <person name="Noback M."/>
            <person name="Noone D."/>
            <person name="O'Reilly M."/>
            <person name="Ogawa K."/>
            <person name="Ogiwara A."/>
            <person name="Oudega B."/>
            <person name="Park S.-H."/>
            <person name="Parro V."/>
            <person name="Pohl T.M."/>
            <person name="Portetelle D."/>
            <person name="Porwollik S."/>
            <person name="Prescott A.M."/>
            <person name="Presecan E."/>
            <person name="Pujic P."/>
            <person name="Purnelle B."/>
            <person name="Rapoport G."/>
            <person name="Rey M."/>
            <person name="Reynolds S."/>
            <person name="Rieger M."/>
            <person name="Rivolta C."/>
            <person name="Rocha E."/>
            <person name="Roche B."/>
            <person name="Rose M."/>
            <person name="Sadaie Y."/>
            <person name="Sato T."/>
            <person name="Scanlan E."/>
            <person name="Schleich S."/>
            <person name="Schroeter R."/>
            <person name="Scoffone F."/>
            <person name="Sekiguchi J."/>
            <person name="Sekowska A."/>
            <person name="Seror S.J."/>
            <person name="Serror P."/>
            <person name="Shin B.-S."/>
            <person name="Soldo B."/>
            <person name="Sorokin A."/>
            <person name="Tacconi E."/>
            <person name="Takagi T."/>
            <person name="Takahashi H."/>
            <person name="Takemaru K."/>
            <person name="Takeuchi M."/>
            <person name="Tamakoshi A."/>
            <person name="Tanaka T."/>
            <person name="Terpstra P."/>
            <person name="Tognoni A."/>
            <person name="Tosato V."/>
            <person name="Uchiyama S."/>
            <person name="Vandenbol M."/>
            <person name="Vannier F."/>
            <person name="Vassarotti A."/>
            <person name="Viari A."/>
            <person name="Wambutt R."/>
            <person name="Wedler E."/>
            <person name="Wedler H."/>
            <person name="Weitzenegger T."/>
            <person name="Winters P."/>
            <person name="Wipat A."/>
            <person name="Yamamoto H."/>
            <person name="Yamane K."/>
            <person name="Yasumoto K."/>
            <person name="Yata K."/>
            <person name="Yoshida K."/>
            <person name="Yoshikawa H.-F."/>
            <person name="Zumstein E."/>
            <person name="Yoshikawa H."/>
            <person name="Danchin A."/>
        </authorList>
    </citation>
    <scope>NUCLEOTIDE SEQUENCE [LARGE SCALE GENOMIC DNA]</scope>
    <source>
        <strain>168</strain>
    </source>
</reference>
<reference key="2">
    <citation type="journal article" date="2019" name="J. Biol. Chem.">
        <title>Sustained sensing in potassium homeostasis: Cyclic di-AMP controls potassium uptake by KimA at the levels of expression and activity.</title>
        <authorList>
            <person name="Gundlach J."/>
            <person name="Krueger L."/>
            <person name="Herzberg C."/>
            <person name="Turdiev A."/>
            <person name="Poehlein A."/>
            <person name="Tascon I."/>
            <person name="Weiss M."/>
            <person name="Hertel D."/>
            <person name="Daniel R."/>
            <person name="Haenelt I."/>
            <person name="Lee V.T."/>
            <person name="Stuelke J."/>
        </authorList>
    </citation>
    <scope>ACTIVITY REGULATION</scope>
    <source>
        <strain>168</strain>
    </source>
</reference>
<gene>
    <name evidence="6" type="primary">cpaA</name>
    <name type="synonym">yjbQ</name>
    <name type="ordered locus">BSU11640</name>
</gene>
<feature type="chain" id="PRO_0000360057" description="Putative Na(+)/H(+) antiporter YjbQ">
    <location>
        <begin position="1"/>
        <end position="614"/>
    </location>
</feature>
<feature type="transmembrane region" description="Helical" evidence="2">
    <location>
        <begin position="3"/>
        <end position="23"/>
    </location>
</feature>
<feature type="transmembrane region" description="Helical" evidence="2">
    <location>
        <begin position="32"/>
        <end position="52"/>
    </location>
</feature>
<feature type="transmembrane region" description="Helical" evidence="2">
    <location>
        <begin position="57"/>
        <end position="77"/>
    </location>
</feature>
<feature type="transmembrane region" description="Helical" evidence="2">
    <location>
        <begin position="107"/>
        <end position="127"/>
    </location>
</feature>
<feature type="transmembrane region" description="Helical" evidence="2">
    <location>
        <begin position="130"/>
        <end position="150"/>
    </location>
</feature>
<feature type="transmembrane region" description="Helical" evidence="2">
    <location>
        <begin position="163"/>
        <end position="183"/>
    </location>
</feature>
<feature type="transmembrane region" description="Helical" evidence="2">
    <location>
        <begin position="193"/>
        <end position="213"/>
    </location>
</feature>
<feature type="transmembrane region" description="Helical" evidence="2">
    <location>
        <begin position="225"/>
        <end position="244"/>
    </location>
</feature>
<feature type="transmembrane region" description="Helical" evidence="2">
    <location>
        <begin position="248"/>
        <end position="267"/>
    </location>
</feature>
<feature type="transmembrane region" description="Helical" evidence="2">
    <location>
        <begin position="282"/>
        <end position="302"/>
    </location>
</feature>
<feature type="transmembrane region" description="Helical" evidence="2">
    <location>
        <begin position="307"/>
        <end position="327"/>
    </location>
</feature>
<feature type="transmembrane region" description="Helical" evidence="2">
    <location>
        <begin position="338"/>
        <end position="358"/>
    </location>
</feature>
<feature type="transmembrane region" description="Helical" evidence="2">
    <location>
        <begin position="368"/>
        <end position="388"/>
    </location>
</feature>
<feature type="domain" description="RCK N-terminal" evidence="3">
    <location>
        <begin position="401"/>
        <end position="519"/>
    </location>
</feature>
<feature type="domain" description="RCK C-terminal" evidence="4">
    <location>
        <begin position="533"/>
        <end position="614"/>
    </location>
</feature>
<accession>O31615</accession>
<keyword id="KW-0050">Antiport</keyword>
<keyword id="KW-1003">Cell membrane</keyword>
<keyword id="KW-0406">Ion transport</keyword>
<keyword id="KW-0472">Membrane</keyword>
<keyword id="KW-1185">Reference proteome</keyword>
<keyword id="KW-0812">Transmembrane</keyword>
<keyword id="KW-1133">Transmembrane helix</keyword>
<keyword id="KW-0813">Transport</keyword>